<gene>
    <name type="primary">USP25</name>
    <name type="synonym">USP21</name>
</gene>
<proteinExistence type="evidence at protein level"/>
<protein>
    <recommendedName>
        <fullName>Ubiquitin carboxyl-terminal hydrolase 25</fullName>
        <ecNumber evidence="11 17">3.4.19.12</ecNumber>
    </recommendedName>
    <alternativeName>
        <fullName>Deubiquitinating enzyme 25</fullName>
    </alternativeName>
    <alternativeName>
        <fullName>USP on chromosome 21</fullName>
    </alternativeName>
    <alternativeName>
        <fullName>Ubiquitin thioesterase 25</fullName>
    </alternativeName>
    <alternativeName>
        <fullName>Ubiquitin-specific-processing protease 25</fullName>
    </alternativeName>
</protein>
<feature type="chain" id="PRO_0000080653" description="Ubiquitin carboxyl-terminal hydrolase 25">
    <location>
        <begin position="1"/>
        <end position="1055"/>
    </location>
</feature>
<feature type="domain" description="UBA-like">
    <location>
        <begin position="14"/>
        <end position="57"/>
    </location>
</feature>
<feature type="domain" description="UIM 1" evidence="3">
    <location>
        <begin position="97"/>
        <end position="116"/>
    </location>
</feature>
<feature type="domain" description="UIM 2" evidence="3">
    <location>
        <begin position="123"/>
        <end position="140"/>
    </location>
</feature>
<feature type="domain" description="USP">
    <location>
        <begin position="169"/>
        <end position="657"/>
    </location>
</feature>
<feature type="region of interest" description="SUMO interaction domain (SIM)">
    <location>
        <begin position="77"/>
        <end position="102"/>
    </location>
</feature>
<feature type="region of interest" description="Disordered" evidence="4">
    <location>
        <begin position="464"/>
        <end position="507"/>
    </location>
</feature>
<feature type="region of interest" description="Disordered" evidence="4">
    <location>
        <begin position="727"/>
        <end position="749"/>
    </location>
</feature>
<feature type="coiled-coil region" evidence="2">
    <location>
        <begin position="541"/>
        <end position="578"/>
    </location>
</feature>
<feature type="coiled-coil region" evidence="2">
    <location>
        <begin position="684"/>
        <end position="717"/>
    </location>
</feature>
<feature type="short sequence motif" description="Required for SUMO paralog-specific binding">
    <location>
        <begin position="89"/>
        <end position="95"/>
    </location>
</feature>
<feature type="compositionally biased region" description="Polar residues" evidence="4">
    <location>
        <begin position="476"/>
        <end position="496"/>
    </location>
</feature>
<feature type="compositionally biased region" description="Low complexity" evidence="4">
    <location>
        <begin position="497"/>
        <end position="507"/>
    </location>
</feature>
<feature type="active site" evidence="9">
    <location>
        <position position="178"/>
    </location>
</feature>
<feature type="active site" evidence="1">
    <location>
        <position position="599"/>
    </location>
</feature>
<feature type="active site" evidence="1">
    <location>
        <position position="607"/>
    </location>
</feature>
<feature type="modified residue" description="Phosphoserine" evidence="27">
    <location>
        <position position="85"/>
    </location>
</feature>
<feature type="modified residue" description="Phosphotyrosine" evidence="10">
    <location>
        <position position="740"/>
    </location>
</feature>
<feature type="cross-link" description="Glycyl lysine isopeptide (Lys-Gly) (interchain with G-Cter in SUMO); alternate">
    <location>
        <position position="99"/>
    </location>
</feature>
<feature type="cross-link" description="Glycyl lysine isopeptide (Lys-Gly) (interchain with G-Cter in ubiquitin); alternate" evidence="9">
    <location>
        <position position="99"/>
    </location>
</feature>
<feature type="splice variant" id="VSP_039632" description="In isoform USP25b." evidence="20">
    <original>S</original>
    <variation>SIMMTPNMQGIIMAIGKSRSVYDRCGPEAGFFK</variation>
    <location>
        <position position="779"/>
    </location>
</feature>
<feature type="splice variant" id="VSP_039631" description="In isoform USP25m." evidence="21">
    <original>S</original>
    <variation>SKPENTTSQPLSNQRVVEVAIPHVGKFMIESKEGGYDDEIMMTPNMQGIIMAIGKSRSVYDRCGPEAGFFK</variation>
    <location>
        <position position="779"/>
    </location>
</feature>
<feature type="sequence variant" id="VAR_090375" description="In EIG19; uncertain significance." evidence="19">
    <original>R</original>
    <variation>Q</variation>
    <location>
        <position position="156"/>
    </location>
</feature>
<feature type="sequence variant" id="VAR_090376" description="In EIG19; uncertain significance." evidence="19">
    <original>M</original>
    <variation>V</variation>
    <location>
        <position position="586"/>
    </location>
</feature>
<feature type="sequence variant" id="VAR_090377" description="In EIG19; the orthologous mouse mutation results in increased neuronal excitability when expressed in pyramidal neurons; gain-of-function variant resulting in increased protein deubiquitination; the mutant protein forms homodimers and does not form homotetramers." evidence="19">
    <location>
        <begin position="889"/>
        <end position="1055"/>
    </location>
</feature>
<feature type="sequence variant" id="VAR_090378" description="In EIG19; uncertain significance." evidence="19">
    <original>Y</original>
    <variation>H</variation>
    <location>
        <position position="916"/>
    </location>
</feature>
<feature type="sequence variant" id="VAR_090379" description="In EIG19; uncertain significance; the orthologous mouse mutation results in increased neuronal excitability when expressed in pyramidal neurons; does not affect function in protein deubiquitination." evidence="19">
    <location>
        <position position="1045"/>
    </location>
</feature>
<feature type="mutagenesis site" description="No interaction with SUMO3; when associated with A-92." evidence="8">
    <original>V</original>
    <variation>A</variation>
    <location>
        <position position="91"/>
    </location>
</feature>
<feature type="mutagenesis site" description="No interaction with SUMO3; when associated with A-91." evidence="8">
    <original>I</original>
    <variation>A</variation>
    <location>
        <position position="92"/>
    </location>
</feature>
<feature type="mutagenesis site" description="Abolishes sumoylation. Decreased enzymatic activity." evidence="8 9">
    <original>K</original>
    <variation>R</variation>
    <location>
        <position position="99"/>
    </location>
</feature>
<feature type="mutagenesis site" description="Abrogates deubiquitinating activity. No effect on homo- or oligomerization." evidence="9 12 14 17">
    <original>C</original>
    <variation>S</variation>
    <location>
        <position position="178"/>
    </location>
</feature>
<feature type="mutagenesis site" description="No effect on interaction with SYK." evidence="10">
    <original>Y</original>
    <variation>F</variation>
    <location>
        <position position="740"/>
    </location>
</feature>
<feature type="mutagenesis site" description="No effect on interaction with SYK." evidence="10">
    <original>T</original>
    <variation>I</variation>
    <location>
        <position position="878"/>
    </location>
</feature>
<feature type="mutagenesis site" description="No effect on interaction with SYK." evidence="10">
    <original>Y</original>
    <variation>F</variation>
    <location>
        <position position="880"/>
    </location>
</feature>
<feature type="mutagenesis site" description="No effect on interaction with SYK." evidence="10">
    <original>I</original>
    <variation>S</variation>
    <location>
        <position position="883"/>
    </location>
</feature>
<feature type="sequence conflict" description="In Ref. 1; AAF32263 and 3; ACN76567." evidence="22" ref="1 3">
    <original>E</original>
    <variation>K</variation>
    <location>
        <position position="544"/>
    </location>
</feature>
<feature type="helix" evidence="28">
    <location>
        <begin position="12"/>
        <end position="27"/>
    </location>
</feature>
<feature type="helix" evidence="28">
    <location>
        <begin position="33"/>
        <end position="43"/>
    </location>
</feature>
<feature type="helix" evidence="28">
    <location>
        <begin position="47"/>
        <end position="55"/>
    </location>
</feature>
<feature type="strand" evidence="28">
    <location>
        <begin position="61"/>
        <end position="64"/>
    </location>
</feature>
<feature type="strand" evidence="28">
    <location>
        <begin position="69"/>
        <end position="71"/>
    </location>
</feature>
<feature type="helix" evidence="28">
    <location>
        <begin position="100"/>
        <end position="116"/>
    </location>
</feature>
<feature type="helix" evidence="28">
    <location>
        <begin position="125"/>
        <end position="136"/>
    </location>
</feature>
<feature type="turn" evidence="30">
    <location>
        <begin position="158"/>
        <end position="161"/>
    </location>
</feature>
<feature type="strand" evidence="29">
    <location>
        <begin position="164"/>
        <end position="166"/>
    </location>
</feature>
<feature type="turn" evidence="30">
    <location>
        <begin position="174"/>
        <end position="176"/>
    </location>
</feature>
<feature type="helix" evidence="31">
    <location>
        <begin position="178"/>
        <end position="189"/>
    </location>
</feature>
<feature type="helix" evidence="31">
    <location>
        <begin position="191"/>
        <end position="198"/>
    </location>
</feature>
<feature type="helix" evidence="31">
    <location>
        <begin position="218"/>
        <end position="234"/>
    </location>
</feature>
<feature type="strand" evidence="31">
    <location>
        <begin position="237"/>
        <end position="240"/>
    </location>
</feature>
<feature type="helix" evidence="31">
    <location>
        <begin position="243"/>
        <end position="248"/>
    </location>
</feature>
<feature type="helix" evidence="31">
    <location>
        <begin position="263"/>
        <end position="279"/>
    </location>
</feature>
<feature type="helix" evidence="29">
    <location>
        <begin position="283"/>
        <end position="285"/>
    </location>
</feature>
<feature type="helix" evidence="31">
    <location>
        <begin position="294"/>
        <end position="299"/>
    </location>
</feature>
<feature type="strand" evidence="31">
    <location>
        <begin position="302"/>
        <end position="304"/>
    </location>
</feature>
<feature type="strand" evidence="31">
    <location>
        <begin position="309"/>
        <end position="311"/>
    </location>
</feature>
<feature type="strand" evidence="31">
    <location>
        <begin position="321"/>
        <end position="326"/>
    </location>
</feature>
<feature type="helix" evidence="31">
    <location>
        <begin position="333"/>
        <end position="342"/>
    </location>
</feature>
<feature type="strand" evidence="30">
    <location>
        <begin position="348"/>
        <end position="350"/>
    </location>
</feature>
<feature type="turn" evidence="30">
    <location>
        <begin position="351"/>
        <end position="355"/>
    </location>
</feature>
<feature type="strand" evidence="31">
    <location>
        <begin position="362"/>
        <end position="365"/>
    </location>
</feature>
<feature type="strand" evidence="31">
    <location>
        <begin position="368"/>
        <end position="375"/>
    </location>
</feature>
<feature type="strand" evidence="31">
    <location>
        <begin position="377"/>
        <end position="380"/>
    </location>
</feature>
<feature type="turn" evidence="31">
    <location>
        <begin position="381"/>
        <end position="384"/>
    </location>
</feature>
<feature type="strand" evidence="31">
    <location>
        <begin position="385"/>
        <end position="388"/>
    </location>
</feature>
<feature type="strand" evidence="31">
    <location>
        <begin position="397"/>
        <end position="400"/>
    </location>
</feature>
<feature type="turn" evidence="31">
    <location>
        <begin position="402"/>
        <end position="404"/>
    </location>
</feature>
<feature type="helix" evidence="31">
    <location>
        <begin position="406"/>
        <end position="408"/>
    </location>
</feature>
<feature type="helix" evidence="31">
    <location>
        <begin position="409"/>
        <end position="437"/>
    </location>
</feature>
<feature type="strand" evidence="31">
    <location>
        <begin position="441"/>
        <end position="444"/>
    </location>
</feature>
<feature type="helix" evidence="31">
    <location>
        <begin position="448"/>
        <end position="460"/>
    </location>
</feature>
<feature type="strand" evidence="31">
    <location>
        <begin position="534"/>
        <end position="536"/>
    </location>
</feature>
<feature type="helix" evidence="31">
    <location>
        <begin position="542"/>
        <end position="579"/>
    </location>
</feature>
<feature type="helix" evidence="31">
    <location>
        <begin position="584"/>
        <end position="586"/>
    </location>
</feature>
<feature type="strand" evidence="31">
    <location>
        <begin position="590"/>
        <end position="601"/>
    </location>
</feature>
<feature type="strand" evidence="31">
    <location>
        <begin position="603"/>
        <end position="614"/>
    </location>
</feature>
<feature type="turn" evidence="31">
    <location>
        <begin position="615"/>
        <end position="618"/>
    </location>
</feature>
<feature type="strand" evidence="31">
    <location>
        <begin position="619"/>
        <end position="624"/>
    </location>
</feature>
<feature type="strand" evidence="31">
    <location>
        <begin position="627"/>
        <end position="629"/>
    </location>
</feature>
<feature type="helix" evidence="31">
    <location>
        <begin position="633"/>
        <end position="640"/>
    </location>
</feature>
<feature type="strand" evidence="31">
    <location>
        <begin position="641"/>
        <end position="644"/>
    </location>
</feature>
<feature type="strand" evidence="31">
    <location>
        <begin position="648"/>
        <end position="658"/>
    </location>
</feature>
<feature type="helix" evidence="31">
    <location>
        <begin position="660"/>
        <end position="662"/>
    </location>
</feature>
<feature type="turn" evidence="31">
    <location>
        <begin position="669"/>
        <end position="671"/>
    </location>
</feature>
<feature type="helix" evidence="31">
    <location>
        <begin position="677"/>
        <end position="680"/>
    </location>
</feature>
<feature type="helix" evidence="31">
    <location>
        <begin position="683"/>
        <end position="700"/>
    </location>
</feature>
<feature type="helix" evidence="32">
    <location>
        <begin position="751"/>
        <end position="765"/>
    </location>
</feature>
<feature type="helix" evidence="32">
    <location>
        <begin position="773"/>
        <end position="793"/>
    </location>
</feature>
<feature type="helix" evidence="32">
    <location>
        <begin position="802"/>
        <end position="804"/>
    </location>
</feature>
<feature type="helix" evidence="32">
    <location>
        <begin position="807"/>
        <end position="813"/>
    </location>
</feature>
<feature type="helix" evidence="32">
    <location>
        <begin position="818"/>
        <end position="829"/>
    </location>
</feature>
<feature type="helix" evidence="32">
    <location>
        <begin position="832"/>
        <end position="834"/>
    </location>
</feature>
<feature type="strand" evidence="32">
    <location>
        <begin position="835"/>
        <end position="837"/>
    </location>
</feature>
<feature type="turn" evidence="32">
    <location>
        <begin position="838"/>
        <end position="840"/>
    </location>
</feature>
<feature type="helix" evidence="32">
    <location>
        <begin position="841"/>
        <end position="853"/>
    </location>
</feature>
<feature type="turn" evidence="32">
    <location>
        <begin position="856"/>
        <end position="858"/>
    </location>
</feature>
<feature type="helix" evidence="32">
    <location>
        <begin position="861"/>
        <end position="889"/>
    </location>
</feature>
<feature type="helix" evidence="32">
    <location>
        <begin position="893"/>
        <end position="913"/>
    </location>
</feature>
<feature type="helix" evidence="32">
    <location>
        <begin position="921"/>
        <end position="943"/>
    </location>
</feature>
<feature type="helix" evidence="32">
    <location>
        <begin position="948"/>
        <end position="960"/>
    </location>
</feature>
<feature type="helix" evidence="32">
    <location>
        <begin position="962"/>
        <end position="965"/>
    </location>
</feature>
<feature type="helix" evidence="32">
    <location>
        <begin position="966"/>
        <end position="970"/>
    </location>
</feature>
<feature type="helix" evidence="32">
    <location>
        <begin position="976"/>
        <end position="990"/>
    </location>
</feature>
<feature type="helix" evidence="32">
    <location>
        <begin position="991"/>
        <end position="994"/>
    </location>
</feature>
<feature type="helix" evidence="32">
    <location>
        <begin position="999"/>
        <end position="1013"/>
    </location>
</feature>
<feature type="helix" evidence="32">
    <location>
        <begin position="1033"/>
        <end position="1044"/>
    </location>
</feature>
<evidence type="ECO:0000250" key="1"/>
<evidence type="ECO:0000255" key="2"/>
<evidence type="ECO:0000255" key="3">
    <source>
        <dbReference type="PROSITE-ProRule" id="PRU00213"/>
    </source>
</evidence>
<evidence type="ECO:0000256" key="4">
    <source>
        <dbReference type="SAM" id="MobiDB-lite"/>
    </source>
</evidence>
<evidence type="ECO:0000269" key="5">
    <source>
    </source>
</evidence>
<evidence type="ECO:0000269" key="6">
    <source>
    </source>
</evidence>
<evidence type="ECO:0000269" key="7">
    <source>
    </source>
</evidence>
<evidence type="ECO:0000269" key="8">
    <source>
    </source>
</evidence>
<evidence type="ECO:0000269" key="9">
    <source>
    </source>
</evidence>
<evidence type="ECO:0000269" key="10">
    <source>
    </source>
</evidence>
<evidence type="ECO:0000269" key="11">
    <source>
    </source>
</evidence>
<evidence type="ECO:0000269" key="12">
    <source>
    </source>
</evidence>
<evidence type="ECO:0000269" key="13">
    <source>
    </source>
</evidence>
<evidence type="ECO:0000269" key="14">
    <source>
    </source>
</evidence>
<evidence type="ECO:0000269" key="15">
    <source>
    </source>
</evidence>
<evidence type="ECO:0000269" key="16">
    <source>
    </source>
</evidence>
<evidence type="ECO:0000269" key="17">
    <source>
    </source>
</evidence>
<evidence type="ECO:0000269" key="18">
    <source>
    </source>
</evidence>
<evidence type="ECO:0000269" key="19">
    <source>
    </source>
</evidence>
<evidence type="ECO:0000303" key="20">
    <source>
    </source>
</evidence>
<evidence type="ECO:0000303" key="21">
    <source ref="3"/>
</evidence>
<evidence type="ECO:0000305" key="22"/>
<evidence type="ECO:0007744" key="23">
    <source>
        <dbReference type="PDB" id="5GP7"/>
    </source>
</evidence>
<evidence type="ECO:0007744" key="24">
    <source>
        <dbReference type="PDB" id="5O71"/>
    </source>
</evidence>
<evidence type="ECO:0007744" key="25">
    <source>
        <dbReference type="PDB" id="6H4J"/>
    </source>
</evidence>
<evidence type="ECO:0007744" key="26">
    <source>
        <dbReference type="PDB" id="6H4K"/>
    </source>
</evidence>
<evidence type="ECO:0007744" key="27">
    <source>
    </source>
</evidence>
<evidence type="ECO:0007829" key="28">
    <source>
        <dbReference type="PDB" id="2MUX"/>
    </source>
</evidence>
<evidence type="ECO:0007829" key="29">
    <source>
        <dbReference type="PDB" id="5O71"/>
    </source>
</evidence>
<evidence type="ECO:0007829" key="30">
    <source>
        <dbReference type="PDB" id="6H4J"/>
    </source>
</evidence>
<evidence type="ECO:0007829" key="31">
    <source>
        <dbReference type="PDB" id="6HEL"/>
    </source>
</evidence>
<evidence type="ECO:0007829" key="32">
    <source>
        <dbReference type="PDB" id="6HEM"/>
    </source>
</evidence>
<sequence>MTVEQNVLQQSAAQKHQQTFLNQLREITGINDTQILQQALKDSNGNLELAVAFLTAKNAKTPQQEETTYYQTALPGNDRYISVGSQADTNVIDLTGDDKDDLQRAIALSLAESNRAFRETGITDEEQAISRVLEASIAENKACLKRTPTEVWRDSRNPYDRKRQDKAPVGLKNVGNTCWFSAVIQSLFNLLEFRRLVLNYKPPSNAQDLPRNQKEHRNLPFMRELRYLFALLVGTKRKYVDPSRAVEILKDAFKSNDSQQQDVSEFTHKLLDWLEDAFQMKAEEETDEEKPKNPMVELFYGRFLAVGVLEGKKFENTEMFGQYPLQVNGFKDLHECLEAAMIEGEIESLHSENSGKSGQEHWFTELPPVLTFELSRFEFNQALGRPEKIHNKLEFPQVLYLDRYMHRNREITRIKREEIKRLKDYLTVLQQRLERYLSYGSGPKRFPLVDVLQYALEFASSKPVCTSPVDDIDASSPPSGSIPSQTLPSTTEQQGALSSELPSTSPSSVAAISSRSVIHKPFTQSRIPPDLPMHPAPRHITEEELSVLESCLHRWRTEIENDTRDLQESISRIHRTIELMYSDKSMIQVPYRLHAVLVHEGQANAGHYWAYIFDHRESRWMKYNDIAVTKSSWEELVRDSFGGYRNASAYCLMYINDKAQFLIQEEFNKETGQPLVGIETLPPDLRDFVEEDNQRFEKELEEWDAQLAQKALQEKLLASQKLRESETSVTTAQAAGDPEYLEQPSRSDFSKHLKEETIQIITKASHEHEDKSPETVLQSAIKLEYARLVKLAQEDTPPETDYRLHHVVVYFIQNQAPKKIIEKTLLEQFGDRNLSFDERCHNIMKVAQAKLEMIKPEEVNLEEYEEWHQDYRKFRETTMYLIIGLENFQRESYIDSLLFLICAYQNNKELLSKGLYRGHDEELISHYRRECLLKLNEQAAELFESGEDREVNNGLIIMNEFIVPFLPLLLVDEMEEKDILAVEDMRNRWCSYLGQEMEPHLQEKLTDFLPKLLDCSMEIKSFHEPPKLPSYSTHELCERFARIMLSLSRTPADGR</sequence>
<keyword id="KW-0002">3D-structure</keyword>
<keyword id="KW-0025">Alternative splicing</keyword>
<keyword id="KW-0175">Coiled coil</keyword>
<keyword id="KW-0963">Cytoplasm</keyword>
<keyword id="KW-0225">Disease variant</keyword>
<keyword id="KW-0887">Epilepsy</keyword>
<keyword id="KW-0378">Hydrolase</keyword>
<keyword id="KW-1017">Isopeptide bond</keyword>
<keyword id="KW-0539">Nucleus</keyword>
<keyword id="KW-0597">Phosphoprotein</keyword>
<keyword id="KW-0645">Protease</keyword>
<keyword id="KW-1267">Proteomics identification</keyword>
<keyword id="KW-1185">Reference proteome</keyword>
<keyword id="KW-0677">Repeat</keyword>
<keyword id="KW-0788">Thiol protease</keyword>
<keyword id="KW-0832">Ubl conjugation</keyword>
<keyword id="KW-0833">Ubl conjugation pathway</keyword>
<accession>Q9UHP3</accession>
<accession>C0LSZ0</accession>
<accession>Q6DHZ9</accession>
<accession>Q9H9W1</accession>
<reference key="1">
    <citation type="journal article" date="1999" name="Genomics">
        <title>USP25, a novel gene encoding a deubiquitinating enzyme, is located in the gene-poor region 21q11.2.</title>
        <authorList>
            <person name="Valero R."/>
            <person name="Marfany G."/>
            <person name="Gonzalez-Angulo O."/>
            <person name="Gonzalez-Gonzalez G."/>
            <person name="Puelles L."/>
            <person name="Gonzalez-Duarte R."/>
        </authorList>
    </citation>
    <scope>NUCLEOTIDE SEQUENCE [MRNA] (ISOFORMS USP25A AND USP25B)</scope>
    <scope>TISSUE SPECIFICITY</scope>
    <source>
        <tissue>Fetal brain</tissue>
    </source>
</reference>
<reference key="2">
    <citation type="journal article" date="2000" name="Genes Chromosomes Cancer">
        <title>Narrowing of the region of allelic loss in 21q11-21 in squamous non-small cell lung carcinoma and cloning of a novel ubiquitin-specific protease gene from the deleted segment.</title>
        <authorList>
            <person name="Groet J."/>
            <person name="Ives J.H."/>
            <person name="Jones T.A."/>
            <person name="Danton M."/>
            <person name="Flomen R.H."/>
            <person name="Sheer D."/>
            <person name="Hrascan R."/>
            <person name="Pavelic K."/>
            <person name="Nizetic D."/>
        </authorList>
    </citation>
    <scope>NUCLEOTIDE SEQUENCE [MRNA] (ISOFORM USP25A)</scope>
    <scope>FUNCTION</scope>
</reference>
<reference key="3">
    <citation type="submission" date="2009-02" db="EMBL/GenBank/DDBJ databases">
        <authorList>
            <person name="Valero R."/>
            <person name="Bosch-Comas A."/>
            <person name="Denuc A."/>
            <person name="Gonzalez-Duarte R."/>
            <person name="Marfany G."/>
        </authorList>
    </citation>
    <scope>NUCLEOTIDE SEQUENCE [MRNA] (ISOFORM USP25M)</scope>
</reference>
<reference key="4">
    <citation type="submission" date="2005-09" db="EMBL/GenBank/DDBJ databases">
        <authorList>
            <person name="Mural R.J."/>
            <person name="Istrail S."/>
            <person name="Sutton G.G."/>
            <person name="Florea L."/>
            <person name="Halpern A.L."/>
            <person name="Mobarry C.M."/>
            <person name="Lippert R."/>
            <person name="Walenz B."/>
            <person name="Shatkay H."/>
            <person name="Dew I."/>
            <person name="Miller J.R."/>
            <person name="Flanigan M.J."/>
            <person name="Edwards N.J."/>
            <person name="Bolanos R."/>
            <person name="Fasulo D."/>
            <person name="Halldorsson B.V."/>
            <person name="Hannenhalli S."/>
            <person name="Turner R."/>
            <person name="Yooseph S."/>
            <person name="Lu F."/>
            <person name="Nusskern D.R."/>
            <person name="Shue B.C."/>
            <person name="Zheng X.H."/>
            <person name="Zhong F."/>
            <person name="Delcher A.L."/>
            <person name="Huson D.H."/>
            <person name="Kravitz S.A."/>
            <person name="Mouchard L."/>
            <person name="Reinert K."/>
            <person name="Remington K.A."/>
            <person name="Clark A.G."/>
            <person name="Waterman M.S."/>
            <person name="Eichler E.E."/>
            <person name="Adams M.D."/>
            <person name="Hunkapiller M.W."/>
            <person name="Myers E.W."/>
            <person name="Venter J.C."/>
        </authorList>
    </citation>
    <scope>NUCLEOTIDE SEQUENCE [LARGE SCALE GENOMIC DNA]</scope>
</reference>
<reference key="5">
    <citation type="journal article" date="2004" name="Genome Res.">
        <title>The status, quality, and expansion of the NIH full-length cDNA project: the Mammalian Gene Collection (MGC).</title>
        <authorList>
            <consortium name="The MGC Project Team"/>
        </authorList>
    </citation>
    <scope>NUCLEOTIDE SEQUENCE [LARGE SCALE MRNA] (ISOFORM USP25A)</scope>
    <source>
        <tissue>Placenta</tissue>
    </source>
</reference>
<reference key="6">
    <citation type="journal article" date="2004" name="Nat. Genet.">
        <title>Complete sequencing and characterization of 21,243 full-length human cDNAs.</title>
        <authorList>
            <person name="Ota T."/>
            <person name="Suzuki Y."/>
            <person name="Nishikawa T."/>
            <person name="Otsuki T."/>
            <person name="Sugiyama T."/>
            <person name="Irie R."/>
            <person name="Wakamatsu A."/>
            <person name="Hayashi K."/>
            <person name="Sato H."/>
            <person name="Nagai K."/>
            <person name="Kimura K."/>
            <person name="Makita H."/>
            <person name="Sekine M."/>
            <person name="Obayashi M."/>
            <person name="Nishi T."/>
            <person name="Shibahara T."/>
            <person name="Tanaka T."/>
            <person name="Ishii S."/>
            <person name="Yamamoto J."/>
            <person name="Saito K."/>
            <person name="Kawai Y."/>
            <person name="Isono Y."/>
            <person name="Nakamura Y."/>
            <person name="Nagahari K."/>
            <person name="Murakami K."/>
            <person name="Yasuda T."/>
            <person name="Iwayanagi T."/>
            <person name="Wagatsuma M."/>
            <person name="Shiratori A."/>
            <person name="Sudo H."/>
            <person name="Hosoiri T."/>
            <person name="Kaku Y."/>
            <person name="Kodaira H."/>
            <person name="Kondo H."/>
            <person name="Sugawara M."/>
            <person name="Takahashi M."/>
            <person name="Kanda K."/>
            <person name="Yokoi T."/>
            <person name="Furuya T."/>
            <person name="Kikkawa E."/>
            <person name="Omura Y."/>
            <person name="Abe K."/>
            <person name="Kamihara K."/>
            <person name="Katsuta N."/>
            <person name="Sato K."/>
            <person name="Tanikawa M."/>
            <person name="Yamazaki M."/>
            <person name="Ninomiya K."/>
            <person name="Ishibashi T."/>
            <person name="Yamashita H."/>
            <person name="Murakawa K."/>
            <person name="Fujimori K."/>
            <person name="Tanai H."/>
            <person name="Kimata M."/>
            <person name="Watanabe M."/>
            <person name="Hiraoka S."/>
            <person name="Chiba Y."/>
            <person name="Ishida S."/>
            <person name="Ono Y."/>
            <person name="Takiguchi S."/>
            <person name="Watanabe S."/>
            <person name="Yosida M."/>
            <person name="Hotuta T."/>
            <person name="Kusano J."/>
            <person name="Kanehori K."/>
            <person name="Takahashi-Fujii A."/>
            <person name="Hara H."/>
            <person name="Tanase T.-O."/>
            <person name="Nomura Y."/>
            <person name="Togiya S."/>
            <person name="Komai F."/>
            <person name="Hara R."/>
            <person name="Takeuchi K."/>
            <person name="Arita M."/>
            <person name="Imose N."/>
            <person name="Musashino K."/>
            <person name="Yuuki H."/>
            <person name="Oshima A."/>
            <person name="Sasaki N."/>
            <person name="Aotsuka S."/>
            <person name="Yoshikawa Y."/>
            <person name="Matsunawa H."/>
            <person name="Ichihara T."/>
            <person name="Shiohata N."/>
            <person name="Sano S."/>
            <person name="Moriya S."/>
            <person name="Momiyama H."/>
            <person name="Satoh N."/>
            <person name="Takami S."/>
            <person name="Terashima Y."/>
            <person name="Suzuki O."/>
            <person name="Nakagawa S."/>
            <person name="Senoh A."/>
            <person name="Mizoguchi H."/>
            <person name="Goto Y."/>
            <person name="Shimizu F."/>
            <person name="Wakebe H."/>
            <person name="Hishigaki H."/>
            <person name="Watanabe T."/>
            <person name="Sugiyama A."/>
            <person name="Takemoto M."/>
            <person name="Kawakami B."/>
            <person name="Yamazaki M."/>
            <person name="Watanabe K."/>
            <person name="Kumagai A."/>
            <person name="Itakura S."/>
            <person name="Fukuzumi Y."/>
            <person name="Fujimori Y."/>
            <person name="Komiyama M."/>
            <person name="Tashiro H."/>
            <person name="Tanigami A."/>
            <person name="Fujiwara T."/>
            <person name="Ono T."/>
            <person name="Yamada K."/>
            <person name="Fujii Y."/>
            <person name="Ozaki K."/>
            <person name="Hirao M."/>
            <person name="Ohmori Y."/>
            <person name="Kawabata A."/>
            <person name="Hikiji T."/>
            <person name="Kobatake N."/>
            <person name="Inagaki H."/>
            <person name="Ikema Y."/>
            <person name="Okamoto S."/>
            <person name="Okitani R."/>
            <person name="Kawakami T."/>
            <person name="Noguchi S."/>
            <person name="Itoh T."/>
            <person name="Shigeta K."/>
            <person name="Senba T."/>
            <person name="Matsumura K."/>
            <person name="Nakajima Y."/>
            <person name="Mizuno T."/>
            <person name="Morinaga M."/>
            <person name="Sasaki M."/>
            <person name="Togashi T."/>
            <person name="Oyama M."/>
            <person name="Hata H."/>
            <person name="Watanabe M."/>
            <person name="Komatsu T."/>
            <person name="Mizushima-Sugano J."/>
            <person name="Satoh T."/>
            <person name="Shirai Y."/>
            <person name="Takahashi Y."/>
            <person name="Nakagawa K."/>
            <person name="Okumura K."/>
            <person name="Nagase T."/>
            <person name="Nomura N."/>
            <person name="Kikuchi H."/>
            <person name="Masuho Y."/>
            <person name="Yamashita R."/>
            <person name="Nakai K."/>
            <person name="Yada T."/>
            <person name="Nakamura Y."/>
            <person name="Ohara O."/>
            <person name="Isogai T."/>
            <person name="Sugano S."/>
        </authorList>
    </citation>
    <scope>NUCLEOTIDE SEQUENCE [LARGE SCALE MRNA] OF 319-1055 (ISOFORM USP25A)</scope>
</reference>
<reference key="7">
    <citation type="journal article" date="2001" name="Genome Biol.">
        <title>Characterization of alternatively spliced products and tissue-specific isoforms of USP28 and USP25.</title>
        <authorList>
            <person name="Valero R."/>
            <person name="Bayes M."/>
            <person name="Francisca Sanchez-Font M."/>
            <person name="Gonzalez-Angulo O."/>
            <person name="Gonzalez-Duarte R."/>
            <person name="Marfany G."/>
        </authorList>
    </citation>
    <scope>ALTERNATIVE SPLICING</scope>
    <scope>FUNCTION</scope>
    <scope>TISSUE SPECIFICITY</scope>
</reference>
<reference key="8">
    <citation type="journal article" date="2006" name="Cell. Mol. Life Sci.">
        <title>The ubiquitin-specific protease USP25 interacts with three sarcomeric proteins.</title>
        <authorList>
            <person name="Bosch-Comas A."/>
            <person name="Lindsten K."/>
            <person name="Gonzalez-Duarte R."/>
            <person name="Masucci M.G."/>
            <person name="Marfany G."/>
        </authorList>
    </citation>
    <scope>ALTERNATIVE SPLICING</scope>
    <scope>INTERACTION WITH ACTA1; FLNC; GAPDH AND MYBPC1</scope>
    <scope>INDUCTION</scope>
    <scope>SUBCELLULAR LOCATION</scope>
    <scope>POSSIBLE FUNCTION</scope>
</reference>
<reference key="9">
    <citation type="journal article" date="2008" name="Mol. Cell">
        <title>Mechanism and consequences for paralog-specific sumoylation of ubiquitin-specific protease 25.</title>
        <authorList>
            <person name="Meulmeester E."/>
            <person name="Kunze M."/>
            <person name="Hsiao H.H."/>
            <person name="Urlaub H."/>
            <person name="Melchior F."/>
        </authorList>
    </citation>
    <scope>SUMOYLATION AT LYS-99</scope>
    <scope>FUNCTION</scope>
    <scope>INTERACTION WITH SUMO1; SUMO3 AND UBIQUITIN</scope>
    <scope>IDENTIFICATION BY MASS SPECTROMETRY</scope>
    <scope>MUTAGENESIS OF VAL-91; ILE-92 AND LYS-99</scope>
</reference>
<reference key="10">
    <citation type="journal article" date="2009" name="PLoS ONE">
        <title>The UBA-UIM domains of the USP25 regulate the enzyme ubiquitination state and modulate substrate recognition.</title>
        <authorList>
            <person name="Denuc A."/>
            <person name="Bosch-Comas A."/>
            <person name="Gonzalez-Duarte R."/>
            <person name="Marfany G."/>
        </authorList>
    </citation>
    <scope>UBIQUITINATION AT LYS-99</scope>
    <scope>DEUBIQUITINATION</scope>
    <scope>ACTIVE SITE CYS-178</scope>
    <scope>ACETYLATION</scope>
    <scope>PHOSPHORYLATION</scope>
    <scope>SUMOYLATION</scope>
    <scope>FUNCTION</scope>
    <scope>SUBCELLULAR LOCATION</scope>
    <scope>SUBUNIT</scope>
    <scope>MUTAGENESIS OF LYS-99 AND CYS-178</scope>
</reference>
<reference key="11">
    <citation type="journal article" date="2010" name="Exp. Cell Res.">
        <title>Functional interaction between the ubiquitin-specific protease 25 and the SYK tyrosine kinase.</title>
        <authorList>
            <person name="Cholay M."/>
            <person name="Reverdy C."/>
            <person name="Benarous R."/>
            <person name="Colland F."/>
            <person name="Daviet L."/>
        </authorList>
    </citation>
    <scope>INTERACTION WITH SYK</scope>
    <scope>PHOSPHORYLATION AT TYR-740</scope>
    <scope>MUTAGENESIS OF TYR-740; THR-878; TYR-880 AND ILE-883</scope>
</reference>
<reference key="12">
    <citation type="journal article" date="2011" name="BMC Syst. Biol.">
        <title>Initial characterization of the human central proteome.</title>
        <authorList>
            <person name="Burkard T.R."/>
            <person name="Planyavsky M."/>
            <person name="Kaupe I."/>
            <person name="Breitwieser F.P."/>
            <person name="Buerckstuemmer T."/>
            <person name="Bennett K.L."/>
            <person name="Superti-Furga G."/>
            <person name="Colinge J."/>
        </authorList>
    </citation>
    <scope>IDENTIFICATION BY MASS SPECTROMETRY [LARGE SCALE ANALYSIS]</scope>
</reference>
<reference key="13">
    <citation type="journal article" date="2012" name="Nat. Immunol.">
        <title>Negative regulation of IL-17-mediated signaling and inflammation by the ubiquitin-specific protease USP25.</title>
        <authorList>
            <person name="Zhong B."/>
            <person name="Liu X."/>
            <person name="Wang X."/>
            <person name="Chang S.H."/>
            <person name="Liu X."/>
            <person name="Wang A."/>
            <person name="Reynolds J.M."/>
            <person name="Dong C."/>
        </authorList>
    </citation>
    <scope>FUNCTION</scope>
    <scope>CATALYTIC ACTIVITY</scope>
</reference>
<reference key="14">
    <citation type="journal article" date="2013" name="J. Proteome Res.">
        <title>Toward a comprehensive characterization of a human cancer cell phosphoproteome.</title>
        <authorList>
            <person name="Zhou H."/>
            <person name="Di Palma S."/>
            <person name="Preisinger C."/>
            <person name="Peng M."/>
            <person name="Polat A.N."/>
            <person name="Heck A.J."/>
            <person name="Mohammed S."/>
        </authorList>
    </citation>
    <scope>PHOSPHORYLATION [LARGE SCALE ANALYSIS] AT SER-85</scope>
    <scope>IDENTIFICATION BY MASS SPECTROMETRY [LARGE SCALE ANALYSIS]</scope>
    <source>
        <tissue>Erythroleukemia</tissue>
    </source>
</reference>
<reference key="15">
    <citation type="journal article" date="2018" name="Biochem. Biophys. Res. Commun.">
        <title>Smurf1 restricts the antiviral function mediated by USP25 through promoting its ubiquitination and degradation.</title>
        <authorList>
            <person name="Qian G."/>
            <person name="Hu X."/>
            <person name="Li G."/>
            <person name="Ding Y."/>
            <person name="Zhu L."/>
            <person name="Zheng H."/>
            <person name="Li M."/>
            <person name="Li Z."/>
            <person name="Pan J."/>
            <person name="Li Y."/>
            <person name="Li G."/>
            <person name="Yang C."/>
            <person name="Liu Y."/>
            <person name="Xie Y."/>
            <person name="Lv H."/>
        </authorList>
    </citation>
    <scope>UBIQUITINATION BY SMURF1</scope>
    <scope>FUNCTION</scope>
</reference>
<reference key="16">
    <citation type="journal article" date="2019" name="Mol. Immunol.">
        <title>USP25 promotes endotoxin tolerance via suppressing K48-linked ubiquitination and degradation of TRAF3 in Kupffer cells.</title>
        <authorList>
            <person name="Wen J."/>
            <person name="Bai H."/>
            <person name="Chen N."/>
            <person name="Zhang W."/>
            <person name="Zhu X."/>
            <person name="Li P."/>
            <person name="Gong J."/>
        </authorList>
    </citation>
    <scope>FUNCTION</scope>
</reference>
<reference key="17">
    <citation type="journal article" date="2023" name="Nat. Commun.">
        <title>USP25 regulates KEAP1-NRF2 anti-oxidation axis and its inactivation protects acetaminophen-induced liver injury in male mice.</title>
        <authorList>
            <person name="Cai C."/>
            <person name="Ma H."/>
            <person name="Peng J."/>
            <person name="Shen X."/>
            <person name="Zhen X."/>
            <person name="Yu C."/>
            <person name="Zhang P."/>
            <person name="Ji F."/>
            <person name="Wang J."/>
        </authorList>
    </citation>
    <scope>FUNCTION</scope>
    <scope>MUTAGENESIS OF CYS-178</scope>
    <scope>CATALYTIC ACTIVITY</scope>
</reference>
<reference key="18">
    <citation type="journal article" date="2023" name="Dev. Cell">
        <title>Usp25-Erlin1/2 activity limits cholesterol flux to restrict virus infection.</title>
        <authorList>
            <person name="Teo Q.W."/>
            <person name="Wong H.H."/>
            <person name="Heunis T."/>
            <person name="Stancheva V."/>
            <person name="Hachim A."/>
            <person name="Lv H."/>
            <person name="Siu L."/>
            <person name="Ho J."/>
            <person name="Lan Y."/>
            <person name="Mok C.K.P."/>
            <person name="Ulferts R."/>
            <person name="Sanyal S."/>
        </authorList>
    </citation>
    <scope>FUNCTION</scope>
    <scope>MUTAGENESIS OF CYS-178</scope>
    <scope>CATALYTIC ACTIVITY</scope>
</reference>
<reference evidence="23" key="19">
    <citation type="journal article" date="2017" name="Genes Dev.">
        <title>USP25 regulates Wnt signaling by controlling the stability of tankyrases.</title>
        <authorList>
            <person name="Xu D."/>
            <person name="Liu J."/>
            <person name="Fu T."/>
            <person name="Shan B."/>
            <person name="Qian L."/>
            <person name="Pan L."/>
            <person name="Yuan J."/>
        </authorList>
    </citation>
    <scope>X-RAY CRYSTALLOGRAPHY (1.50 ANGSTROMS) OF 1046-1055</scope>
    <scope>FUNCTION</scope>
    <scope>SUBCELLULAR LOCATION</scope>
    <scope>MUTAGENESIS OF CYS-178</scope>
</reference>
<reference evidence="24" key="20">
    <citation type="journal article" date="2018" name="Nat. Commun.">
        <title>A quaternary tetramer assembly inhibits the deubiquitinating activity of USP25.</title>
        <authorList>
            <person name="Liu B."/>
            <person name="Sureda-Gomez M."/>
            <person name="Zhen Y."/>
            <person name="Amador V."/>
            <person name="Reverter D."/>
        </authorList>
    </citation>
    <scope>X-RAY CRYSTALLOGRAPHY (3.28 ANGSTROMS) OF 1-714</scope>
    <scope>SUBUNIT</scope>
    <scope>MUTAGENESIS OF CYS-178</scope>
</reference>
<reference evidence="25 26" key="21">
    <citation type="journal article" date="2019" name="Mol. Cell">
        <title>Differential Oligomerization of the Deubiquitinases USP25 and USP28 Regulates Their Activities.</title>
        <authorList>
            <person name="Sauer F."/>
            <person name="Klemm T."/>
            <person name="Kollampally R.B."/>
            <person name="Tessmer I."/>
            <person name="Nair R.K."/>
            <person name="Popov N."/>
            <person name="Kisker C."/>
        </authorList>
    </citation>
    <scope>X-RAY CRYSTALLOGRAPHY (2.05 ANGSTROMS) OF 765-1055</scope>
    <scope>FUNCTION</scope>
    <scope>SUBUNIT</scope>
</reference>
<reference key="22">
    <citation type="journal article" date="2024" name="Brain">
        <title>Heterozygous variants in USP25 cause genetic generalized epilepsy.</title>
        <authorList>
            <person name="Fan C.X."/>
            <person name="Liu X.R."/>
            <person name="Mei D.Q."/>
            <person name="Li B.M."/>
            <person name="Li W.B."/>
            <person name="Xie H.C."/>
            <person name="Wang J."/>
            <person name="Shen N.X."/>
            <person name="Ye Z.L."/>
            <person name="You Q.L."/>
            <person name="Li L.Y."/>
            <person name="Qu X.C."/>
            <person name="Chen L.Z."/>
            <person name="Liang J.J."/>
            <person name="Zhang M.R."/>
            <person name="He N."/>
            <person name="Li J."/>
            <person name="Gao J.Y."/>
            <person name="Deng W.Y."/>
            <person name="Liu W.Z."/>
            <person name="Wang W.T."/>
            <person name="Liao W.P."/>
            <person name="Chen Q."/>
            <person name="Shi Y.W."/>
        </authorList>
    </citation>
    <scope>VARIANTS EIG19 GLN-156; VAL-586; 889-GLN--ARG-1055 DEL; HIS-916 AND LEU-1045 DEL</scope>
    <scope>INVOLVEMENT IN EIG19</scope>
    <scope>CHARACTERIZATION OF VARIANTS EIG19 GLN-156; VAL-586; 889-GLN--ARG-1055 DEL; HIS-916 AND LEU-1045 DEL</scope>
    <scope>FUNCTION</scope>
    <scope>SUBUNIT</scope>
    <scope>SUBCELLULAR LOCATION</scope>
    <scope>TISSUE SPECIFICITY</scope>
</reference>
<organism>
    <name type="scientific">Homo sapiens</name>
    <name type="common">Human</name>
    <dbReference type="NCBI Taxonomy" id="9606"/>
    <lineage>
        <taxon>Eukaryota</taxon>
        <taxon>Metazoa</taxon>
        <taxon>Chordata</taxon>
        <taxon>Craniata</taxon>
        <taxon>Vertebrata</taxon>
        <taxon>Euteleostomi</taxon>
        <taxon>Mammalia</taxon>
        <taxon>Eutheria</taxon>
        <taxon>Euarchontoglires</taxon>
        <taxon>Primates</taxon>
        <taxon>Haplorrhini</taxon>
        <taxon>Catarrhini</taxon>
        <taxon>Hominidae</taxon>
        <taxon>Homo</taxon>
    </lineage>
</organism>
<comment type="function">
    <text evidence="11 12 13 15 16 17 18 19">Deubiquitinating enzyme that hydrolyzes ubiquitin moieties conjugated to substrates and thus, functions in various biological processes including inflammation and immune response (PubMed:29518389, PubMed:37683630). Modulates the Wnt/beta-catenin pathway by deubiquitinating and stabilizing tankyrases TNKS1 and TNKS2 (PubMed:28619731, PubMed:30926243, PubMed:38875478). Regulates KEAP1-NRF2 axis in the defense against oxidative assaults by deubiquitinating KEAP1 and protecting it from degradation leading to degradation of the NRF2 transcription factor that is responsible for mounting an anti-oxidation gene expression program (PubMed:37339955). Positively regulates RNA virus-induced innate signaling by interacting with and deubiquitinating ERLIN1 and ERLIN2 (PubMed:37683630). In turn, restricts virus production by regulating cholesterol biosynthetic flux (PubMed:37683630). Acts as a negative regulator of interleukin-17-mediated signaling and inflammation through the removal of 'Lys-63'-linked ubiquitination of TRAF5 and TRAF6 (PubMed:23042150). Prevents the ubiquitination and degradation of TRAF3 to reduce the phosphorylation levels of JNK and P38, the secretion of IL-1B and to induce endotoxin tolerance (PubMed:30579117).</text>
</comment>
<comment type="function">
    <text>The muscle-specific isoform (USP25m) may have a role in the regulation of muscular differentiation and function.</text>
</comment>
<comment type="catalytic activity">
    <reaction evidence="11 17">
        <text>Thiol-dependent hydrolysis of ester, thioester, amide, peptide and isopeptide bonds formed by the C-terminal Gly of ubiquitin (a 76-residue protein attached to proteins as an intracellular targeting signal).</text>
        <dbReference type="EC" id="3.4.19.12"/>
    </reaction>
</comment>
<comment type="subunit">
    <text evidence="7 8 9 10 14 19">Homotetramer, inhibited form (PubMed:30478318, PubMed:30926243, PubMed:38875478). Homodimer, active form (PubMed:30926243, PubMed:38875478). Interacts with ACTA1 (via its C-terminus); the interaction occurs for all isoforms but is strongest for isoform USP25m in muscle differentiating cells. Interacts (isoform USP25m only) with MYBPC1; the interaction prevents proteasomal degradation of MYBPC1. Interacts (isoform USP25m only) with FLNC (via filament repeats 17-18, 20-21 and 24). Interacts with GAPDH. Interacts with SUMO3; the interaction sumoylates efficiently USP25. Interacts with SUMO2; the interaction sumoylates efficiently USP25. Interacts with SUMO1; the interaction only weakly sumoylates USP25. Interacts with SYK; phosphorylates USP25 and regulates USP25 intracellular levels.</text>
</comment>
<comment type="interaction">
    <interactant intactId="EBI-2513462">
        <id>Q9UHP3</id>
    </interactant>
    <interactant intactId="EBI-946999">
        <id>P31150</id>
        <label>GDI1</label>
    </interactant>
    <organismsDiffer>false</organismsDiffer>
    <experiments>3</experiments>
</comment>
<comment type="interaction">
    <interactant intactId="EBI-2513462">
        <id>Q9UHP3</id>
    </interactant>
    <interactant intactId="EBI-751857">
        <id>O15481</id>
        <label>MAGEB4</label>
    </interactant>
    <organismsDiffer>false</organismsDiffer>
    <experiments>3</experiments>
</comment>
<comment type="interaction">
    <interactant intactId="EBI-2513462">
        <id>Q9UHP3</id>
    </interactant>
    <interactant intactId="EBI-10172526">
        <id>Q9UJV3-2</id>
        <label>MID2</label>
    </interactant>
    <organismsDiffer>false</organismsDiffer>
    <experiments>3</experiments>
</comment>
<comment type="interaction">
    <interactant intactId="EBI-2513462">
        <id>Q9UHP3</id>
    </interactant>
    <interactant intactId="EBI-476586">
        <id>P17612</id>
        <label>PRKACA</label>
    </interactant>
    <organismsDiffer>false</organismsDiffer>
    <experiments>3</experiments>
</comment>
<comment type="interaction">
    <interactant intactId="EBI-2513462">
        <id>Q9UHP3</id>
    </interactant>
    <interactant intactId="EBI-11983583">
        <id>Q3MIT2</id>
        <label>PUS10</label>
    </interactant>
    <organismsDiffer>false</organismsDiffer>
    <experiments>3</experiments>
</comment>
<comment type="interaction">
    <interactant intactId="EBI-2513462">
        <id>Q9UHP3</id>
    </interactant>
    <interactant intactId="EBI-746453">
        <id>P54725</id>
        <label>RAD23A</label>
    </interactant>
    <organismsDiffer>false</organismsDiffer>
    <experiments>12</experiments>
</comment>
<comment type="interaction">
    <interactant intactId="EBI-2513462">
        <id>Q9UHP3</id>
    </interactant>
    <interactant intactId="EBI-954531">
        <id>P54727</id>
        <label>RAD23B</label>
    </interactant>
    <organismsDiffer>false</organismsDiffer>
    <experiments>6</experiments>
</comment>
<comment type="interaction">
    <interactant intactId="EBI-2513462">
        <id>Q9UHP3</id>
    </interactant>
    <interactant intactId="EBI-473220">
        <id>P61956</id>
        <label>SUMO2</label>
    </interactant>
    <organismsDiffer>false</organismsDiffer>
    <experiments>6</experiments>
</comment>
<comment type="interaction">
    <interactant intactId="EBI-2513462">
        <id>Q9UHP3</id>
    </interactant>
    <interactant intactId="EBI-78302">
        <id>P43405</id>
        <label>SYK</label>
    </interactant>
    <organismsDiffer>false</organismsDiffer>
    <experiments>8</experiments>
</comment>
<comment type="interaction">
    <interactant intactId="EBI-2513462">
        <id>Q9UHP3</id>
    </interactant>
    <interactant intactId="EBI-296151">
        <id>P37173</id>
        <label>TGFBR2</label>
    </interactant>
    <organismsDiffer>false</organismsDiffer>
    <experiments>3</experiments>
</comment>
<comment type="interaction">
    <interactant intactId="EBI-2513462">
        <id>Q9UHP3</id>
    </interactant>
    <interactant intactId="EBI-721293">
        <id>Q9BTV4</id>
        <label>TMEM43</label>
    </interactant>
    <organismsDiffer>false</organismsDiffer>
    <experiments>3</experiments>
</comment>
<comment type="interaction">
    <interactant intactId="EBI-2513462">
        <id>Q9UHP3</id>
    </interactant>
    <interactant intactId="EBI-4398527">
        <id>Q9H2K2</id>
        <label>TNKS2</label>
    </interactant>
    <organismsDiffer>false</organismsDiffer>
    <experiments>2</experiments>
</comment>
<comment type="interaction">
    <interactant intactId="EBI-2513462">
        <id>Q9UHP3</id>
    </interactant>
    <interactant intactId="EBI-743265">
        <id>Q9BUY5</id>
        <label>ZNF426</label>
    </interactant>
    <organismsDiffer>false</organismsDiffer>
    <experiments>3</experiments>
</comment>
<comment type="interaction">
    <interactant intactId="EBI-2513462">
        <id>Q9UHP3</id>
    </interactant>
    <interactant intactId="EBI-25492395">
        <id>PRO_0000449633</id>
        <label>rep</label>
        <dbReference type="UniProtKB" id="P0DTD1"/>
    </interactant>
    <organismsDiffer>true</organismsDiffer>
    <experiments>6</experiments>
</comment>
<comment type="subcellular location">
    <subcellularLocation>
        <location evidence="7 9 12 19">Cytoplasm</location>
    </subcellularLocation>
</comment>
<comment type="subcellular location">
    <molecule>Isoform USP25m</molecule>
    <subcellularLocation>
        <location evidence="1">Cytoplasm</location>
    </subcellularLocation>
    <subcellularLocation>
        <location evidence="1">Nucleus</location>
    </subcellularLocation>
    <text evidence="1">Some transient punctuate nuclear location in myotubes during myocyte development.</text>
</comment>
<comment type="alternative products">
    <event type="alternative splicing"/>
    <isoform>
        <id>Q9UHP3-2</id>
        <name>USP25a</name>
        <sequence type="displayed"/>
    </isoform>
    <isoform>
        <id>Q9UHP3-1</id>
        <name>USP25b</name>
        <sequence type="described" ref="VSP_039632"/>
    </isoform>
    <isoform>
        <id>Q9UHP3-3</id>
        <name>USP25m</name>
        <name>Muscle-specific isoform</name>
        <sequence type="described" ref="VSP_039631"/>
    </isoform>
</comment>
<comment type="tissue specificity">
    <text evidence="5 6 19">Isoform USP25a is found in most adult and fetal tissues; expression is moderately high in testis, pancreas, kidney, skeletal muscle, liver, lung, placenta, heart, but very low in peripheral blood, colon, small intestine, ovary, prostate, thymus and spleen. Expressed in the brain, with high levels in the cerebral cortex (PubMed:38875478). Isoform USP25b is found in all tissues except heart and skeletal muscle. Isoform USP25m is heart and skeletal muscle specific.</text>
</comment>
<comment type="induction">
    <text evidence="7">The muscle-specific isoform (USP25m) is up-regulated during myocyte differentiation. Levels increase up to 100-fold towards completion of differentiation.</text>
</comment>
<comment type="PTM">
    <text evidence="9">Acetylated.</text>
</comment>
<comment type="PTM">
    <text evidence="9 13">Sumoylation impairs binding to and hydrolysis of ubiquitin chains. Sumoylated preferentially with SUMO2 or SUMO3. Desumoylated by SENP1. Polyubiquitinated by SMURF1 by promoting the 'Lys-48'-linkage leading to proteasomal degradation (PubMed:29518389).</text>
</comment>
<comment type="PTM">
    <text evidence="9">Preferentially monoubiquitinated but can also be polyubiquitinated. Autodeubiquitinated. Ubiquitination activates the enzymatic activity either by preventing sumoylation or by allowing novel interactions.</text>
</comment>
<comment type="PTM">
    <text evidence="9 10">Phosphorylation in the C-terminal by SYK regulates USP25 cellular levels.</text>
</comment>
<comment type="disease" evidence="19">
    <disease id="DI-06987">
        <name>Epilepsy, idiopathic generalized 19</name>
        <acronym>EIG19</acronym>
        <description>An autosomal dominant form of idiopathic generalized epilepsy, a disorder characterized by recurring generalized seizures in the absence of detectable brain lesions and/or metabolic abnormalities. Generalized seizures arise diffusely and simultaneously from both hemispheres of the brain. Seizure types include juvenile myoclonic seizures, absence seizures, and generalized tonic-clonic seizures. EIG19 is characterized by onset of variable types of seizures in the first two decades of life.</description>
        <dbReference type="MIM" id="621064"/>
    </disease>
    <text>Disease susceptibility is associated with variants affecting the gene represented in this entry.</text>
</comment>
<comment type="similarity">
    <text evidence="22">Belongs to the peptidase C19 family.</text>
</comment>
<dbReference type="EC" id="3.4.19.12" evidence="11 17"/>
<dbReference type="EMBL" id="AF170562">
    <property type="protein sequence ID" value="AAF32263.1"/>
    <property type="molecule type" value="mRNA"/>
</dbReference>
<dbReference type="EMBL" id="AF134213">
    <property type="protein sequence ID" value="AAF24998.1"/>
    <property type="molecule type" value="mRNA"/>
</dbReference>
<dbReference type="EMBL" id="FJ763652">
    <property type="protein sequence ID" value="ACN76567.1"/>
    <property type="molecule type" value="mRNA"/>
</dbReference>
<dbReference type="EMBL" id="CH471079">
    <property type="protein sequence ID" value="EAX10041.1"/>
    <property type="molecule type" value="Genomic_DNA"/>
</dbReference>
<dbReference type="EMBL" id="BC075792">
    <property type="protein sequence ID" value="AAH75792.1"/>
    <property type="molecule type" value="mRNA"/>
</dbReference>
<dbReference type="EMBL" id="AK022574">
    <property type="protein sequence ID" value="BAB14107.1"/>
    <property type="molecule type" value="mRNA"/>
</dbReference>
<dbReference type="CCDS" id="CCDS33515.1">
    <molecule id="Q9UHP3-2"/>
</dbReference>
<dbReference type="CCDS" id="CCDS63336.1">
    <molecule id="Q9UHP3-3"/>
</dbReference>
<dbReference type="CCDS" id="CCDS63337.1">
    <molecule id="Q9UHP3-1"/>
</dbReference>
<dbReference type="RefSeq" id="NP_001269970.1">
    <molecule id="Q9UHP3-3"/>
    <property type="nucleotide sequence ID" value="NM_001283041.3"/>
</dbReference>
<dbReference type="RefSeq" id="NP_001269971.1">
    <molecule id="Q9UHP3-1"/>
    <property type="nucleotide sequence ID" value="NM_001283042.3"/>
</dbReference>
<dbReference type="RefSeq" id="NP_037528.3">
    <molecule id="Q9UHP3-2"/>
    <property type="nucleotide sequence ID" value="NM_013396.4"/>
</dbReference>
<dbReference type="PDB" id="2MUX">
    <property type="method" value="NMR"/>
    <property type="chains" value="A=1-146"/>
</dbReference>
<dbReference type="PDB" id="5GP7">
    <property type="method" value="X-ray"/>
    <property type="resolution" value="1.50 A"/>
    <property type="chains" value="B=1046-1055"/>
</dbReference>
<dbReference type="PDB" id="5O71">
    <property type="method" value="X-ray"/>
    <property type="resolution" value="3.28 A"/>
    <property type="chains" value="A=1-714"/>
</dbReference>
<dbReference type="PDB" id="6H4J">
    <property type="method" value="X-ray"/>
    <property type="resolution" value="3.07 A"/>
    <property type="chains" value="A/B=157-706"/>
</dbReference>
<dbReference type="PDB" id="6H4K">
    <property type="method" value="X-ray"/>
    <property type="resolution" value="2.05 A"/>
    <property type="chains" value="A=765-1055"/>
</dbReference>
<dbReference type="PDB" id="6HEL">
    <property type="method" value="X-ray"/>
    <property type="resolution" value="2.94 A"/>
    <property type="chains" value="A/B=157-714"/>
</dbReference>
<dbReference type="PDB" id="6HEM">
    <property type="method" value="X-ray"/>
    <property type="resolution" value="1.72 A"/>
    <property type="chains" value="A=748-1048"/>
</dbReference>
<dbReference type="PDBsum" id="2MUX"/>
<dbReference type="PDBsum" id="5GP7"/>
<dbReference type="PDBsum" id="5O71"/>
<dbReference type="PDBsum" id="6H4J"/>
<dbReference type="PDBsum" id="6H4K"/>
<dbReference type="PDBsum" id="6HEL"/>
<dbReference type="PDBsum" id="6HEM"/>
<dbReference type="BMRB" id="Q9UHP3"/>
<dbReference type="SMR" id="Q9UHP3"/>
<dbReference type="BioGRID" id="118895">
    <property type="interactions" value="113"/>
</dbReference>
<dbReference type="FunCoup" id="Q9UHP3">
    <property type="interactions" value="2958"/>
</dbReference>
<dbReference type="IntAct" id="Q9UHP3">
    <property type="interactions" value="62"/>
</dbReference>
<dbReference type="MINT" id="Q9UHP3"/>
<dbReference type="STRING" id="9606.ENSP00000383044"/>
<dbReference type="BindingDB" id="Q9UHP3"/>
<dbReference type="ChEMBL" id="CHEMBL4295975"/>
<dbReference type="MEROPS" id="C19.041"/>
<dbReference type="iPTMnet" id="Q9UHP3"/>
<dbReference type="PhosphoSitePlus" id="Q9UHP3"/>
<dbReference type="BioMuta" id="USP25"/>
<dbReference type="DMDM" id="302393833"/>
<dbReference type="jPOST" id="Q9UHP3"/>
<dbReference type="MassIVE" id="Q9UHP3"/>
<dbReference type="PaxDb" id="9606-ENSP00000383044"/>
<dbReference type="PeptideAtlas" id="Q9UHP3"/>
<dbReference type="ProteomicsDB" id="84385">
    <molecule id="Q9UHP3-2"/>
</dbReference>
<dbReference type="ProteomicsDB" id="84386">
    <molecule id="Q9UHP3-1"/>
</dbReference>
<dbReference type="ProteomicsDB" id="84387">
    <molecule id="Q9UHP3-3"/>
</dbReference>
<dbReference type="Pumba" id="Q9UHP3"/>
<dbReference type="Antibodypedia" id="5805">
    <property type="antibodies" value="256 antibodies from 30 providers"/>
</dbReference>
<dbReference type="DNASU" id="29761"/>
<dbReference type="Ensembl" id="ENST00000285679.10">
    <molecule id="Q9UHP3-2"/>
    <property type="protein sequence ID" value="ENSP00000285679.6"/>
    <property type="gene ID" value="ENSG00000155313.16"/>
</dbReference>
<dbReference type="Ensembl" id="ENST00000285681.6">
    <molecule id="Q9UHP3-1"/>
    <property type="protein sequence ID" value="ENSP00000285681.2"/>
    <property type="gene ID" value="ENSG00000155313.16"/>
</dbReference>
<dbReference type="Ensembl" id="ENST00000400183.7">
    <molecule id="Q9UHP3-3"/>
    <property type="protein sequence ID" value="ENSP00000383044.2"/>
    <property type="gene ID" value="ENSG00000155313.16"/>
</dbReference>
<dbReference type="GeneID" id="29761"/>
<dbReference type="KEGG" id="hsa:29761"/>
<dbReference type="MANE-Select" id="ENST00000400183.7">
    <molecule id="Q9UHP3-3"/>
    <property type="protein sequence ID" value="ENSP00000383044.2"/>
    <property type="RefSeq nucleotide sequence ID" value="NM_001283041.3"/>
    <property type="RefSeq protein sequence ID" value="NP_001269970.1"/>
</dbReference>
<dbReference type="UCSC" id="uc002yjy.3">
    <molecule id="Q9UHP3-2"/>
    <property type="organism name" value="human"/>
</dbReference>
<dbReference type="AGR" id="HGNC:12624"/>
<dbReference type="CTD" id="29761"/>
<dbReference type="DisGeNET" id="29761"/>
<dbReference type="GeneCards" id="USP25"/>
<dbReference type="HGNC" id="HGNC:12624">
    <property type="gene designation" value="USP25"/>
</dbReference>
<dbReference type="HPA" id="ENSG00000155313">
    <property type="expression patterns" value="Tissue enhanced (skeletal)"/>
</dbReference>
<dbReference type="MIM" id="604736">
    <property type="type" value="gene"/>
</dbReference>
<dbReference type="MIM" id="621064">
    <property type="type" value="phenotype"/>
</dbReference>
<dbReference type="neXtProt" id="NX_Q9UHP3"/>
<dbReference type="OpenTargets" id="ENSG00000155313"/>
<dbReference type="PharmGKB" id="PA37249"/>
<dbReference type="VEuPathDB" id="HostDB:ENSG00000155313"/>
<dbReference type="eggNOG" id="KOG1863">
    <property type="taxonomic scope" value="Eukaryota"/>
</dbReference>
<dbReference type="GeneTree" id="ENSGT00940000157962"/>
<dbReference type="HOGENOM" id="CLU_012188_0_0_1"/>
<dbReference type="InParanoid" id="Q9UHP3"/>
<dbReference type="OMA" id="PTMQGII"/>
<dbReference type="OrthoDB" id="2420415at2759"/>
<dbReference type="PAN-GO" id="Q9UHP3">
    <property type="GO annotations" value="6 GO annotations based on evolutionary models"/>
</dbReference>
<dbReference type="PhylomeDB" id="Q9UHP3"/>
<dbReference type="TreeFam" id="TF329035"/>
<dbReference type="PathwayCommons" id="Q9UHP3"/>
<dbReference type="Reactome" id="R-HSA-5689880">
    <property type="pathway name" value="Ub-specific processing proteases"/>
</dbReference>
<dbReference type="SignaLink" id="Q9UHP3"/>
<dbReference type="SIGNOR" id="Q9UHP3"/>
<dbReference type="BioGRID-ORCS" id="29761">
    <property type="hits" value="12 hits in 1206 CRISPR screens"/>
</dbReference>
<dbReference type="ChiTaRS" id="USP25">
    <property type="organism name" value="human"/>
</dbReference>
<dbReference type="GenomeRNAi" id="29761"/>
<dbReference type="Pharos" id="Q9UHP3">
    <property type="development level" value="Tchem"/>
</dbReference>
<dbReference type="PRO" id="PR:Q9UHP3"/>
<dbReference type="Proteomes" id="UP000005640">
    <property type="component" value="Chromosome 21"/>
</dbReference>
<dbReference type="RNAct" id="Q9UHP3">
    <property type="molecule type" value="protein"/>
</dbReference>
<dbReference type="Bgee" id="ENSG00000155313">
    <property type="expression patterns" value="Expressed in sperm and 200 other cell types or tissues"/>
</dbReference>
<dbReference type="ExpressionAtlas" id="Q9UHP3">
    <property type="expression patterns" value="baseline and differential"/>
</dbReference>
<dbReference type="GO" id="GO:0005737">
    <property type="term" value="C:cytoplasm"/>
    <property type="evidence" value="ECO:0000314"/>
    <property type="project" value="UniProt"/>
</dbReference>
<dbReference type="GO" id="GO:0005829">
    <property type="term" value="C:cytosol"/>
    <property type="evidence" value="ECO:0000314"/>
    <property type="project" value="HPA"/>
</dbReference>
<dbReference type="GO" id="GO:0005783">
    <property type="term" value="C:endoplasmic reticulum"/>
    <property type="evidence" value="ECO:0000314"/>
    <property type="project" value="ParkinsonsUK-UCL"/>
</dbReference>
<dbReference type="GO" id="GO:0005634">
    <property type="term" value="C:nucleus"/>
    <property type="evidence" value="ECO:0000318"/>
    <property type="project" value="GO_Central"/>
</dbReference>
<dbReference type="GO" id="GO:0051117">
    <property type="term" value="F:ATPase binding"/>
    <property type="evidence" value="ECO:0000353"/>
    <property type="project" value="ParkinsonsUK-UCL"/>
</dbReference>
<dbReference type="GO" id="GO:0004843">
    <property type="term" value="F:cysteine-type deubiquitinase activity"/>
    <property type="evidence" value="ECO:0000315"/>
    <property type="project" value="UniProtKB"/>
</dbReference>
<dbReference type="GO" id="GO:0101005">
    <property type="term" value="F:deubiquitinase activity"/>
    <property type="evidence" value="ECO:0000314"/>
    <property type="project" value="UniProt"/>
</dbReference>
<dbReference type="GO" id="GO:0008233">
    <property type="term" value="F:peptidase activity"/>
    <property type="evidence" value="ECO:0000304"/>
    <property type="project" value="ProtInc"/>
</dbReference>
<dbReference type="GO" id="GO:0032183">
    <property type="term" value="F:SUMO binding"/>
    <property type="evidence" value="ECO:0000353"/>
    <property type="project" value="UniProtKB"/>
</dbReference>
<dbReference type="GO" id="GO:0043130">
    <property type="term" value="F:ubiquitin binding"/>
    <property type="evidence" value="ECO:0000303"/>
    <property type="project" value="ParkinsonsUK-UCL"/>
</dbReference>
<dbReference type="GO" id="GO:0031625">
    <property type="term" value="F:ubiquitin protein ligase binding"/>
    <property type="evidence" value="ECO:0000353"/>
    <property type="project" value="ParkinsonsUK-UCL"/>
</dbReference>
<dbReference type="GO" id="GO:0019783">
    <property type="term" value="F:ubiquitin-like protein peptidase activity"/>
    <property type="evidence" value="ECO:0000303"/>
    <property type="project" value="ParkinsonsUK-UCL"/>
</dbReference>
<dbReference type="GO" id="GO:1904293">
    <property type="term" value="P:negative regulation of ERAD pathway"/>
    <property type="evidence" value="ECO:0000315"/>
    <property type="project" value="ParkinsonsUK-UCL"/>
</dbReference>
<dbReference type="GO" id="GO:1903882">
    <property type="term" value="P:negative regulation of interleukin-17-mediated signaling pathway"/>
    <property type="evidence" value="ECO:0000314"/>
    <property type="project" value="UniProt"/>
</dbReference>
<dbReference type="GO" id="GO:1902883">
    <property type="term" value="P:negative regulation of response to oxidative stress"/>
    <property type="evidence" value="ECO:0000314"/>
    <property type="project" value="UniProt"/>
</dbReference>
<dbReference type="GO" id="GO:0016579">
    <property type="term" value="P:protein deubiquitination"/>
    <property type="evidence" value="ECO:0000314"/>
    <property type="project" value="ParkinsonsUK-UCL"/>
</dbReference>
<dbReference type="GO" id="GO:0071108">
    <property type="term" value="P:protein K48-linked deubiquitination"/>
    <property type="evidence" value="ECO:0000315"/>
    <property type="project" value="UniProtKB"/>
</dbReference>
<dbReference type="GO" id="GO:0070536">
    <property type="term" value="P:protein K63-linked deubiquitination"/>
    <property type="evidence" value="ECO:0000315"/>
    <property type="project" value="UniProtKB"/>
</dbReference>
<dbReference type="GO" id="GO:0036211">
    <property type="term" value="P:protein modification process"/>
    <property type="evidence" value="ECO:0000304"/>
    <property type="project" value="ProtInc"/>
</dbReference>
<dbReference type="GO" id="GO:0006508">
    <property type="term" value="P:proteolysis"/>
    <property type="evidence" value="ECO:0000304"/>
    <property type="project" value="ProtInc"/>
</dbReference>
<dbReference type="GO" id="GO:0031647">
    <property type="term" value="P:regulation of protein stability"/>
    <property type="evidence" value="ECO:0000318"/>
    <property type="project" value="GO_Central"/>
</dbReference>
<dbReference type="CDD" id="cd02665">
    <property type="entry name" value="Peptidase_C19I"/>
    <property type="match status" value="1"/>
</dbReference>
<dbReference type="CDD" id="cd14354">
    <property type="entry name" value="UBA_UBP25"/>
    <property type="match status" value="1"/>
</dbReference>
<dbReference type="CDD" id="cd20486">
    <property type="entry name" value="USP25_C"/>
    <property type="match status" value="1"/>
</dbReference>
<dbReference type="FunFam" id="1.10.8.10:FF:000023">
    <property type="entry name" value="Putative ubiquitin carboxyl-terminal hydrolase 25"/>
    <property type="match status" value="1"/>
</dbReference>
<dbReference type="FunFam" id="3.90.70.10:FF:000004">
    <property type="entry name" value="Putative ubiquitin carboxyl-terminal hydrolase 25"/>
    <property type="match status" value="1"/>
</dbReference>
<dbReference type="Gene3D" id="6.10.250.1720">
    <property type="match status" value="1"/>
</dbReference>
<dbReference type="Gene3D" id="3.90.70.10">
    <property type="entry name" value="Cysteine proteinases"/>
    <property type="match status" value="1"/>
</dbReference>
<dbReference type="Gene3D" id="1.10.8.10">
    <property type="entry name" value="DNA helicase RuvA subunit, C-terminal domain"/>
    <property type="match status" value="1"/>
</dbReference>
<dbReference type="InterPro" id="IPR038765">
    <property type="entry name" value="Papain-like_cys_pep_sf"/>
</dbReference>
<dbReference type="InterPro" id="IPR050164">
    <property type="entry name" value="Peptidase_C19"/>
</dbReference>
<dbReference type="InterPro" id="IPR001394">
    <property type="entry name" value="Peptidase_C19_UCH"/>
</dbReference>
<dbReference type="InterPro" id="IPR009060">
    <property type="entry name" value="UBA-like_sf"/>
</dbReference>
<dbReference type="InterPro" id="IPR054109">
    <property type="entry name" value="UBA_8"/>
</dbReference>
<dbReference type="InterPro" id="IPR003903">
    <property type="entry name" value="UIM_dom"/>
</dbReference>
<dbReference type="InterPro" id="IPR054108">
    <property type="entry name" value="USP25/28_UIM"/>
</dbReference>
<dbReference type="InterPro" id="IPR018200">
    <property type="entry name" value="USP_CS"/>
</dbReference>
<dbReference type="InterPro" id="IPR028889">
    <property type="entry name" value="USP_dom"/>
</dbReference>
<dbReference type="PANTHER" id="PTHR24006">
    <property type="entry name" value="UBIQUITIN CARBOXYL-TERMINAL HYDROLASE"/>
    <property type="match status" value="1"/>
</dbReference>
<dbReference type="PANTHER" id="PTHR24006:SF666">
    <property type="entry name" value="UBIQUITIN CARBOXYL-TERMINAL HYDROLASE 25"/>
    <property type="match status" value="1"/>
</dbReference>
<dbReference type="Pfam" id="PF22566">
    <property type="entry name" value="UBA_8"/>
    <property type="match status" value="1"/>
</dbReference>
<dbReference type="Pfam" id="PF00443">
    <property type="entry name" value="UCH"/>
    <property type="match status" value="1"/>
</dbReference>
<dbReference type="Pfam" id="PF21909">
    <property type="entry name" value="USP_UIM_N"/>
    <property type="match status" value="1"/>
</dbReference>
<dbReference type="SMART" id="SM00726">
    <property type="entry name" value="UIM"/>
    <property type="match status" value="1"/>
</dbReference>
<dbReference type="SUPFAM" id="SSF54001">
    <property type="entry name" value="Cysteine proteinases"/>
    <property type="match status" value="1"/>
</dbReference>
<dbReference type="SUPFAM" id="SSF46934">
    <property type="entry name" value="UBA-like"/>
    <property type="match status" value="1"/>
</dbReference>
<dbReference type="PROSITE" id="PS50330">
    <property type="entry name" value="UIM"/>
    <property type="match status" value="1"/>
</dbReference>
<dbReference type="PROSITE" id="PS00972">
    <property type="entry name" value="USP_1"/>
    <property type="match status" value="1"/>
</dbReference>
<dbReference type="PROSITE" id="PS00973">
    <property type="entry name" value="USP_2"/>
    <property type="match status" value="1"/>
</dbReference>
<dbReference type="PROSITE" id="PS50235">
    <property type="entry name" value="USP_3"/>
    <property type="match status" value="1"/>
</dbReference>
<name>UBP25_HUMAN</name>